<comment type="function">
    <text evidence="9 10 11">Receptor kinase involved in the perception of C-terminally encoded plant signaling peptide (CEP) and subsequent regulation of root and shoot development (PubMed:25324386). Required for xylem and phloem cell files morphology and organization, probably by preventing ectopic lignification in phloem cells (PubMed:21853254). Together with CEPR2, mediates systemic nitrogen (N)-demand signaling upon the perception of root-derived peptides (e.g. CEP1) via the up-regulation of genes involved in N uptake and assimilation pathways (PubMed:25324386). Positively regulates lateral root initiation and development; probably repressed by the signaling peptide CEP5 (PubMed:27296247).</text>
</comment>
<comment type="catalytic activity">
    <reaction evidence="7">
        <text>L-tyrosyl-[protein] + ATP = O-phospho-L-tyrosyl-[protein] + ADP + H(+)</text>
        <dbReference type="Rhea" id="RHEA:10596"/>
        <dbReference type="Rhea" id="RHEA-COMP:10136"/>
        <dbReference type="Rhea" id="RHEA-COMP:20101"/>
        <dbReference type="ChEBI" id="CHEBI:15378"/>
        <dbReference type="ChEBI" id="CHEBI:30616"/>
        <dbReference type="ChEBI" id="CHEBI:46858"/>
        <dbReference type="ChEBI" id="CHEBI:61978"/>
        <dbReference type="ChEBI" id="CHEBI:456216"/>
        <dbReference type="EC" id="2.7.10.1"/>
    </reaction>
</comment>
<comment type="subunit">
    <text evidence="10">Interacts with the root-derived peptides CEP1, CEP3 and CEP5.</text>
</comment>
<comment type="interaction">
    <interactant intactId="EBI-20656524">
        <id>Q9FGL5</id>
    </interactant>
    <interactant intactId="EBI-590903">
        <id>Q9ZWC8</id>
        <label>BRL1</label>
    </interactant>
    <organismsDiffer>false</organismsDiffer>
    <experiments>2</experiments>
</comment>
<comment type="subcellular location">
    <subcellularLocation>
        <location evidence="14">Cell membrane</location>
        <topology evidence="4">Single-pass membrane protein</topology>
    </subcellularLocation>
</comment>
<comment type="tissue specificity">
    <text evidence="9 10 11">Expressed in the vasculature, especially in phloem and procambium regions, of stems, leaves, cotyledons, sepals, pedals, pedicels, hypocotyls and roots (in primary and lateral roots, but not in root tips) (PubMed:21853254, PubMed:25324386). Expressed in the root from the basal meristem onward. Present in the phloem pole pericycle and in the adjacent phloem (PubMed:27296247).</text>
</comment>
<comment type="developmental stage">
    <text evidence="9 11">Expressed in the vasculature, especially in phloem and procambium regions, from the mature embryo stage through the adult plant (PubMed:21853254). Excluded from early stages of lateral root development (PubMed:27296247).</text>
</comment>
<comment type="disruption phenotype">
    <text evidence="9 10 11">Defects in vascular organization and phloem differentiation in inflorescence stems, characterized by aberrant accumulation of highly lignified cells, typical of xylem or fiber cells, within the phloem, and phloem cells sometimes adjacent to xylem cells. Malformed vascular cells files, probably due to defects in oriented cell divisions or cell morphology, and leading to both phloem specification defects and disrupted xylem vessel formation. Short inflorescence stems and increased anthocyanin accumulation in leaves (PubMed:21853254). Reduced total lateral root density, due to a reduction in stage I and II lateral root primordia and, to a lower extent, to fewer emerged lateral roots. Impaired sensitivity to CEP5 with respect to root growth regulation (PubMed:27296247). Growth retardation accompanied with nitrogen (N)-deficiency symptoms. Slight enhanced lateral root elongation in simple mutant. The double mutant cepr1 cepr2 is insensitive to CEP1 in a root growth regulation and exhibit pleiotropic phenotype characterized by pale-green leaves and enhanced lateral root elongation. At adult stage, smaller rosette leaves and shorter floral stems, accompanied by anthocyanin accumulation. Down-regulation of genes involved in N uptake and assimilation pathways (e.g. NRT1.1, NRT2.1 and NRT3.1) leading to impaired nitrate uptake activity. Altered systemic induction of genes involved in N uptake and assimilation pathways in N-depletion conditions (PubMed:25324386).</text>
</comment>
<comment type="similarity">
    <text evidence="5">Belongs to the protein kinase superfamily. Ser/Thr protein kinase family.</text>
</comment>
<proteinExistence type="evidence at protein level"/>
<sequence>MRLKNFPFFVLFFFFCFNSNQSWGLMSSNQQPQFFKLMKNSLFGDALSTWNVYDVGTNYCNFTGVRCDGQGLVTDLDLSGLSLSGIFPDGVCSYFPNLRVLRLSHNHLNKSSSFLNTIPNCSLLRDLNMSSVYLKGTLPDFSQMKSLRVIDMSWNHFTGSFPLSIFNLTDLEYLNFNENPELDLWTLPDSVSKLTKLTHMLLMTCMLHGNIPRSIGNLTSLVDLELSGNFLSGEIPKEIGNLSNLRQLELYYNYHLTGSIPEEIGNLKNLTDIDISVSRLTGSIPDSICSLPNLRVLQLYNNSLTGEIPKSLGNSKTLKILSLYDNYLTGELPPNLGSSSPMIALDVSENRLSGPLPAHVCKSGKLLYFLVLQNRFTGSIPETYGSCKTLIRFRVASNRLVGTIPQGVMSLPHVSIIDLAYNSLSGPIPNAIGNAWNLSELFMQSNRISGVIPHELSHSTNLVKLDLSNNQLSGPIPSEVGRLRKLNLLVLQGNHLDSSIPDSLSNLKSLNVLDLSSNLLTGRIPENLSELLPTSINFSSNRLSGPIPVSLIRGGLVESFSDNPNLCIPPTAGSSDLKFPMCQEPHGKKKLSSIWAILVSVFILVLGVIMFYLRQRMSKNRAVIEQDETLASSFFSYDVKSFHRISFDQREILESLVDKNIVGHGGSGTVYRVELKSGEVVAVKKLWSQSNKDSASEDKMHLNKELKTEVETLGSIRHKNIVKLFSYFSSLDCSLLVYEYMPNGNLWDALHKGFVHLEWRTRHQIAVGVAQGLAYLHHDLSPPIIHRDIKSTNILLDVNYQPKVADFGIAKVLQARGKDSTTTVMAGTYGYLAPEYAYSSKATIKCDVYSFGVVLMELITGKKPVDSCFGENKNIVNWVSTKIDTKEGLIETLDKRLSESSKADMINALRVAIRCTSRTPTIRPTMNEVVQLLIDATPQGGPDMTSKPTTKIKDSIVSDHLTQTRL</sequence>
<protein>
    <recommendedName>
        <fullName evidence="13">Receptor protein-tyrosine kinase CEPR1</fullName>
        <ecNumber evidence="7">2.7.10.1</ecNumber>
    </recommendedName>
    <alternativeName>
        <fullName evidence="13">Protein C-TERMINALLY ENCODED PEPTIDE RECEPTOR 1</fullName>
    </alternativeName>
    <alternativeName>
        <fullName evidence="12">Protein XYLEM INTERMIXED WITH PHLOEM 1</fullName>
    </alternativeName>
</protein>
<accession>Q9FGL5</accession>
<accession>Q8GY29</accession>
<keyword id="KW-0067">ATP-binding</keyword>
<keyword id="KW-1003">Cell membrane</keyword>
<keyword id="KW-0217">Developmental protein</keyword>
<keyword id="KW-0325">Glycoprotein</keyword>
<keyword id="KW-0418">Kinase</keyword>
<keyword id="KW-0433">Leucine-rich repeat</keyword>
<keyword id="KW-0472">Membrane</keyword>
<keyword id="KW-0547">Nucleotide-binding</keyword>
<keyword id="KW-0597">Phosphoprotein</keyword>
<keyword id="KW-0675">Receptor</keyword>
<keyword id="KW-1185">Reference proteome</keyword>
<keyword id="KW-0677">Repeat</keyword>
<keyword id="KW-0723">Serine/threonine-protein kinase</keyword>
<keyword id="KW-0732">Signal</keyword>
<keyword id="KW-0808">Transferase</keyword>
<keyword id="KW-0812">Transmembrane</keyword>
<keyword id="KW-1133">Transmembrane helix</keyword>
<gene>
    <name evidence="13" type="primary">CEPR1</name>
    <name evidence="12" type="synonym">XIP1</name>
    <name evidence="15" type="ordered locus">At5g49660</name>
    <name evidence="16" type="ORF">MNI5.4</name>
</gene>
<evidence type="ECO:0000250" key="1">
    <source>
        <dbReference type="UniProtKB" id="C0LGT6"/>
    </source>
</evidence>
<evidence type="ECO:0000250" key="2">
    <source>
        <dbReference type="UniProtKB" id="O22476"/>
    </source>
</evidence>
<evidence type="ECO:0000250" key="3">
    <source>
        <dbReference type="UniProtKB" id="Q9M0G7"/>
    </source>
</evidence>
<evidence type="ECO:0000255" key="4"/>
<evidence type="ECO:0000255" key="5">
    <source>
        <dbReference type="PROSITE-ProRule" id="PRU00159"/>
    </source>
</evidence>
<evidence type="ECO:0000255" key="6">
    <source>
        <dbReference type="PROSITE-ProRule" id="PRU00498"/>
    </source>
</evidence>
<evidence type="ECO:0000255" key="7">
    <source>
        <dbReference type="PROSITE-ProRule" id="PRU10027"/>
    </source>
</evidence>
<evidence type="ECO:0000256" key="8">
    <source>
        <dbReference type="SAM" id="MobiDB-lite"/>
    </source>
</evidence>
<evidence type="ECO:0000269" key="9">
    <source>
    </source>
</evidence>
<evidence type="ECO:0000269" key="10">
    <source>
    </source>
</evidence>
<evidence type="ECO:0000269" key="11">
    <source>
    </source>
</evidence>
<evidence type="ECO:0000303" key="12">
    <source>
    </source>
</evidence>
<evidence type="ECO:0000303" key="13">
    <source>
    </source>
</evidence>
<evidence type="ECO:0000305" key="14"/>
<evidence type="ECO:0000312" key="15">
    <source>
        <dbReference type="Araport" id="AT5G49660"/>
    </source>
</evidence>
<evidence type="ECO:0000312" key="16">
    <source>
        <dbReference type="EMBL" id="BAB10911.1"/>
    </source>
</evidence>
<dbReference type="EC" id="2.7.10.1" evidence="7"/>
<dbReference type="EMBL" id="FJ708796">
    <property type="protein sequence ID" value="ACN59387.1"/>
    <property type="molecule type" value="mRNA"/>
</dbReference>
<dbReference type="EMBL" id="AB025627">
    <property type="protein sequence ID" value="BAB10911.1"/>
    <property type="molecule type" value="Genomic_DNA"/>
</dbReference>
<dbReference type="EMBL" id="AB025613">
    <property type="protein sequence ID" value="BAB10911.1"/>
    <property type="status" value="JOINED"/>
    <property type="molecule type" value="Genomic_DNA"/>
</dbReference>
<dbReference type="EMBL" id="CP002688">
    <property type="protein sequence ID" value="AED95842.1"/>
    <property type="molecule type" value="Genomic_DNA"/>
</dbReference>
<dbReference type="EMBL" id="AK117901">
    <property type="protein sequence ID" value="BAC42540.1"/>
    <property type="molecule type" value="mRNA"/>
</dbReference>
<dbReference type="RefSeq" id="NP_199777.1">
    <property type="nucleotide sequence ID" value="NM_124344.3"/>
</dbReference>
<dbReference type="SMR" id="Q9FGL5"/>
<dbReference type="FunCoup" id="Q9FGL5">
    <property type="interactions" value="980"/>
</dbReference>
<dbReference type="IntAct" id="Q9FGL5">
    <property type="interactions" value="8"/>
</dbReference>
<dbReference type="STRING" id="3702.Q9FGL5"/>
<dbReference type="GlyCosmos" id="Q9FGL5">
    <property type="glycosylation" value="12 sites, No reported glycans"/>
</dbReference>
<dbReference type="GlyGen" id="Q9FGL5">
    <property type="glycosylation" value="13 sites"/>
</dbReference>
<dbReference type="iPTMnet" id="Q9FGL5"/>
<dbReference type="PaxDb" id="3702-AT5G49660.1"/>
<dbReference type="ProteomicsDB" id="220386"/>
<dbReference type="EnsemblPlants" id="AT5G49660.1">
    <property type="protein sequence ID" value="AT5G49660.1"/>
    <property type="gene ID" value="AT5G49660"/>
</dbReference>
<dbReference type="GeneID" id="835028"/>
<dbReference type="Gramene" id="AT5G49660.1">
    <property type="protein sequence ID" value="AT5G49660.1"/>
    <property type="gene ID" value="AT5G49660"/>
</dbReference>
<dbReference type="KEGG" id="ath:AT5G49660"/>
<dbReference type="Araport" id="AT5G49660"/>
<dbReference type="TAIR" id="AT5G49660">
    <property type="gene designation" value="XIP1"/>
</dbReference>
<dbReference type="eggNOG" id="ENOG502QSZ3">
    <property type="taxonomic scope" value="Eukaryota"/>
</dbReference>
<dbReference type="HOGENOM" id="CLU_000288_22_1_1"/>
<dbReference type="InParanoid" id="Q9FGL5"/>
<dbReference type="OMA" id="IAMRCTC"/>
<dbReference type="PhylomeDB" id="Q9FGL5"/>
<dbReference type="PRO" id="PR:Q9FGL5"/>
<dbReference type="Proteomes" id="UP000006548">
    <property type="component" value="Chromosome 5"/>
</dbReference>
<dbReference type="ExpressionAtlas" id="Q9FGL5">
    <property type="expression patterns" value="baseline and differential"/>
</dbReference>
<dbReference type="GO" id="GO:0005886">
    <property type="term" value="C:plasma membrane"/>
    <property type="evidence" value="ECO:0007669"/>
    <property type="project" value="UniProtKB-SubCell"/>
</dbReference>
<dbReference type="GO" id="GO:0005524">
    <property type="term" value="F:ATP binding"/>
    <property type="evidence" value="ECO:0007669"/>
    <property type="project" value="UniProtKB-KW"/>
</dbReference>
<dbReference type="GO" id="GO:0042277">
    <property type="term" value="F:peptide binding"/>
    <property type="evidence" value="ECO:0000353"/>
    <property type="project" value="UniProtKB"/>
</dbReference>
<dbReference type="GO" id="GO:0017046">
    <property type="term" value="F:peptide hormone binding"/>
    <property type="evidence" value="ECO:0000314"/>
    <property type="project" value="TAIR"/>
</dbReference>
<dbReference type="GO" id="GO:0051428">
    <property type="term" value="F:peptide hormone receptor binding"/>
    <property type="evidence" value="ECO:0000314"/>
    <property type="project" value="TAIR"/>
</dbReference>
<dbReference type="GO" id="GO:0001653">
    <property type="term" value="F:peptide receptor activity"/>
    <property type="evidence" value="ECO:0000316"/>
    <property type="project" value="UniProtKB"/>
</dbReference>
<dbReference type="GO" id="GO:0004674">
    <property type="term" value="F:protein serine/threonine kinase activity"/>
    <property type="evidence" value="ECO:0007669"/>
    <property type="project" value="UniProtKB-KW"/>
</dbReference>
<dbReference type="GO" id="GO:0004714">
    <property type="term" value="F:transmembrane receptor protein tyrosine kinase activity"/>
    <property type="evidence" value="ECO:0007669"/>
    <property type="project" value="UniProtKB-EC"/>
</dbReference>
<dbReference type="GO" id="GO:0048437">
    <property type="term" value="P:floral organ development"/>
    <property type="evidence" value="ECO:0000315"/>
    <property type="project" value="TAIR"/>
</dbReference>
<dbReference type="GO" id="GO:0010311">
    <property type="term" value="P:lateral root formation"/>
    <property type="evidence" value="ECO:0000315"/>
    <property type="project" value="UniProtKB"/>
</dbReference>
<dbReference type="GO" id="GO:1902025">
    <property type="term" value="P:nitrate import"/>
    <property type="evidence" value="ECO:0000316"/>
    <property type="project" value="UniProtKB"/>
</dbReference>
<dbReference type="GO" id="GO:1901333">
    <property type="term" value="P:positive regulation of lateral root development"/>
    <property type="evidence" value="ECO:0000315"/>
    <property type="project" value="UniProtKB"/>
</dbReference>
<dbReference type="GO" id="GO:0031540">
    <property type="term" value="P:regulation of anthocyanin biosynthetic process"/>
    <property type="evidence" value="ECO:0000315"/>
    <property type="project" value="UniProtKB"/>
</dbReference>
<dbReference type="GO" id="GO:2000023">
    <property type="term" value="P:regulation of lateral root development"/>
    <property type="evidence" value="ECO:0000315"/>
    <property type="project" value="UniProtKB"/>
</dbReference>
<dbReference type="GO" id="GO:1901141">
    <property type="term" value="P:regulation of lignin biosynthetic process"/>
    <property type="evidence" value="ECO:0000315"/>
    <property type="project" value="UniProtKB"/>
</dbReference>
<dbReference type="GO" id="GO:2000280">
    <property type="term" value="P:regulation of root development"/>
    <property type="evidence" value="ECO:0000316"/>
    <property type="project" value="UniProtKB"/>
</dbReference>
<dbReference type="GO" id="GO:2000652">
    <property type="term" value="P:regulation of secondary cell wall biogenesis"/>
    <property type="evidence" value="ECO:0000315"/>
    <property type="project" value="UniProtKB"/>
</dbReference>
<dbReference type="GO" id="GO:0080113">
    <property type="term" value="P:regulation of seed growth"/>
    <property type="evidence" value="ECO:0000315"/>
    <property type="project" value="TAIR"/>
</dbReference>
<dbReference type="GO" id="GO:0048831">
    <property type="term" value="P:regulation of shoot system development"/>
    <property type="evidence" value="ECO:0000316"/>
    <property type="project" value="UniProtKB"/>
</dbReference>
<dbReference type="GO" id="GO:0090548">
    <property type="term" value="P:response to nitrate starvation"/>
    <property type="evidence" value="ECO:0000316"/>
    <property type="project" value="TAIR"/>
</dbReference>
<dbReference type="GO" id="GO:0010051">
    <property type="term" value="P:xylem and phloem pattern formation"/>
    <property type="evidence" value="ECO:0000315"/>
    <property type="project" value="TAIR"/>
</dbReference>
<dbReference type="FunFam" id="1.10.510.10:FF:000632">
    <property type="entry name" value="leucine-rich repeat receptor-like protein kinase TDR"/>
    <property type="match status" value="1"/>
</dbReference>
<dbReference type="FunFam" id="3.80.10.10:FF:000111">
    <property type="entry name" value="LRR receptor-like serine/threonine-protein kinase ERECTA"/>
    <property type="match status" value="1"/>
</dbReference>
<dbReference type="FunFam" id="3.80.10.10:FF:001606">
    <property type="entry name" value="Receptor protein-tyrosine kinase CEPR1"/>
    <property type="match status" value="1"/>
</dbReference>
<dbReference type="FunFam" id="3.30.200.20:FF:000530">
    <property type="entry name" value="receptor protein-tyrosine kinase CEPR1"/>
    <property type="match status" value="1"/>
</dbReference>
<dbReference type="Gene3D" id="3.30.200.20">
    <property type="entry name" value="Phosphorylase Kinase, domain 1"/>
    <property type="match status" value="1"/>
</dbReference>
<dbReference type="Gene3D" id="3.80.10.10">
    <property type="entry name" value="Ribonuclease Inhibitor"/>
    <property type="match status" value="2"/>
</dbReference>
<dbReference type="Gene3D" id="1.10.510.10">
    <property type="entry name" value="Transferase(Phosphotransferase) domain 1"/>
    <property type="match status" value="1"/>
</dbReference>
<dbReference type="InterPro" id="IPR011009">
    <property type="entry name" value="Kinase-like_dom_sf"/>
</dbReference>
<dbReference type="InterPro" id="IPR001611">
    <property type="entry name" value="Leu-rich_rpt"/>
</dbReference>
<dbReference type="InterPro" id="IPR003591">
    <property type="entry name" value="Leu-rich_rpt_typical-subtyp"/>
</dbReference>
<dbReference type="InterPro" id="IPR032675">
    <property type="entry name" value="LRR_dom_sf"/>
</dbReference>
<dbReference type="InterPro" id="IPR013210">
    <property type="entry name" value="LRR_N_plant-typ"/>
</dbReference>
<dbReference type="InterPro" id="IPR000719">
    <property type="entry name" value="Prot_kinase_dom"/>
</dbReference>
<dbReference type="InterPro" id="IPR017441">
    <property type="entry name" value="Protein_kinase_ATP_BS"/>
</dbReference>
<dbReference type="InterPro" id="IPR008271">
    <property type="entry name" value="Ser/Thr_kinase_AS"/>
</dbReference>
<dbReference type="InterPro" id="IPR051420">
    <property type="entry name" value="Ser_Thr_Kinases_DiverseReg"/>
</dbReference>
<dbReference type="PANTHER" id="PTHR48005">
    <property type="entry name" value="LEUCINE RICH REPEAT KINASE 2"/>
    <property type="match status" value="1"/>
</dbReference>
<dbReference type="PANTHER" id="PTHR48005:SF23">
    <property type="entry name" value="RECEPTOR-LIKE PROTEIN KINASE HSL1"/>
    <property type="match status" value="1"/>
</dbReference>
<dbReference type="Pfam" id="PF00560">
    <property type="entry name" value="LRR_1"/>
    <property type="match status" value="7"/>
</dbReference>
<dbReference type="Pfam" id="PF08263">
    <property type="entry name" value="LRRNT_2"/>
    <property type="match status" value="1"/>
</dbReference>
<dbReference type="Pfam" id="PF00069">
    <property type="entry name" value="Pkinase"/>
    <property type="match status" value="1"/>
</dbReference>
<dbReference type="PRINTS" id="PR00019">
    <property type="entry name" value="LEURICHRPT"/>
</dbReference>
<dbReference type="SMART" id="SM00365">
    <property type="entry name" value="LRR_SD22"/>
    <property type="match status" value="3"/>
</dbReference>
<dbReference type="SMART" id="SM00369">
    <property type="entry name" value="LRR_TYP"/>
    <property type="match status" value="6"/>
</dbReference>
<dbReference type="SMART" id="SM00220">
    <property type="entry name" value="S_TKc"/>
    <property type="match status" value="1"/>
</dbReference>
<dbReference type="SUPFAM" id="SSF52058">
    <property type="entry name" value="L domain-like"/>
    <property type="match status" value="1"/>
</dbReference>
<dbReference type="SUPFAM" id="SSF56112">
    <property type="entry name" value="Protein kinase-like (PK-like)"/>
    <property type="match status" value="1"/>
</dbReference>
<dbReference type="SUPFAM" id="SSF52047">
    <property type="entry name" value="RNI-like"/>
    <property type="match status" value="1"/>
</dbReference>
<dbReference type="PROSITE" id="PS00107">
    <property type="entry name" value="PROTEIN_KINASE_ATP"/>
    <property type="match status" value="1"/>
</dbReference>
<dbReference type="PROSITE" id="PS50011">
    <property type="entry name" value="PROTEIN_KINASE_DOM"/>
    <property type="match status" value="1"/>
</dbReference>
<dbReference type="PROSITE" id="PS00108">
    <property type="entry name" value="PROTEIN_KINASE_ST"/>
    <property type="match status" value="1"/>
</dbReference>
<feature type="signal peptide" evidence="4">
    <location>
        <begin position="1"/>
        <end position="22"/>
    </location>
</feature>
<feature type="chain" id="PRO_5009973770" description="Receptor protein-tyrosine kinase CEPR1">
    <location>
        <begin position="23"/>
        <end position="966"/>
    </location>
</feature>
<feature type="topological domain" description="Extracellular" evidence="14">
    <location>
        <begin position="23"/>
        <end position="592"/>
    </location>
</feature>
<feature type="transmembrane region" description="Helical" evidence="4">
    <location>
        <begin position="593"/>
        <end position="613"/>
    </location>
</feature>
<feature type="topological domain" description="Cytoplasmic" evidence="14">
    <location>
        <begin position="614"/>
        <end position="966"/>
    </location>
</feature>
<feature type="repeat" description="LRR 1" evidence="4">
    <location>
        <begin position="70"/>
        <end position="94"/>
    </location>
</feature>
<feature type="repeat" description="LRR 2" evidence="4">
    <location>
        <begin position="95"/>
        <end position="120"/>
    </location>
</feature>
<feature type="repeat" description="LRR 3" evidence="4">
    <location>
        <begin position="122"/>
        <end position="144"/>
    </location>
</feature>
<feature type="repeat" description="LRR 4" evidence="4">
    <location>
        <begin position="145"/>
        <end position="168"/>
    </location>
</feature>
<feature type="repeat" description="LRR 5" evidence="4">
    <location>
        <begin position="170"/>
        <end position="194"/>
    </location>
</feature>
<feature type="repeat" description="LRR 6" evidence="4">
    <location>
        <begin position="195"/>
        <end position="218"/>
    </location>
</feature>
<feature type="repeat" description="LRR 7" evidence="4">
    <location>
        <begin position="219"/>
        <end position="242"/>
    </location>
</feature>
<feature type="repeat" description="LRR 8" evidence="4">
    <location>
        <begin position="245"/>
        <end position="267"/>
    </location>
</feature>
<feature type="repeat" description="LRR 9" evidence="4">
    <location>
        <begin position="268"/>
        <end position="291"/>
    </location>
</feature>
<feature type="repeat" description="LRR 10" evidence="4">
    <location>
        <begin position="292"/>
        <end position="315"/>
    </location>
</feature>
<feature type="repeat" description="LRR 11" evidence="4">
    <location>
        <begin position="317"/>
        <end position="339"/>
    </location>
</feature>
<feature type="repeat" description="LRR 12" evidence="4">
    <location>
        <begin position="341"/>
        <end position="363"/>
    </location>
</feature>
<feature type="repeat" description="LRR 13" evidence="4">
    <location>
        <begin position="365"/>
        <end position="386"/>
    </location>
</feature>
<feature type="repeat" description="LRR 14" evidence="4">
    <location>
        <begin position="387"/>
        <end position="411"/>
    </location>
</feature>
<feature type="repeat" description="LRR 15" evidence="4">
    <location>
        <begin position="412"/>
        <end position="435"/>
    </location>
</feature>
<feature type="repeat" description="LRR 16" evidence="4">
    <location>
        <begin position="437"/>
        <end position="459"/>
    </location>
</feature>
<feature type="repeat" description="LRR 17" evidence="4">
    <location>
        <begin position="460"/>
        <end position="483"/>
    </location>
</feature>
<feature type="repeat" description="LRR 18" evidence="4">
    <location>
        <begin position="484"/>
        <end position="507"/>
    </location>
</feature>
<feature type="repeat" description="LRR 19" evidence="4">
    <location>
        <begin position="508"/>
        <end position="531"/>
    </location>
</feature>
<feature type="repeat" description="LRR 20" evidence="4">
    <location>
        <begin position="533"/>
        <end position="554"/>
    </location>
</feature>
<feature type="domain" description="Protein kinase" evidence="5">
    <location>
        <begin position="656"/>
        <end position="934"/>
    </location>
</feature>
<feature type="region of interest" description="Disordered" evidence="8">
    <location>
        <begin position="937"/>
        <end position="966"/>
    </location>
</feature>
<feature type="active site" description="Proton acceptor" evidence="5">
    <location>
        <position position="788"/>
    </location>
</feature>
<feature type="binding site" evidence="5">
    <location>
        <begin position="662"/>
        <end position="670"/>
    </location>
    <ligand>
        <name>ATP</name>
        <dbReference type="ChEBI" id="CHEBI:30616"/>
    </ligand>
</feature>
<feature type="binding site" evidence="5">
    <location>
        <position position="684"/>
    </location>
    <ligand>
        <name>ATP</name>
        <dbReference type="ChEBI" id="CHEBI:30616"/>
    </ligand>
</feature>
<feature type="modified residue" description="Phosphotyrosine" evidence="2">
    <location>
        <position position="738"/>
    </location>
</feature>
<feature type="modified residue" description="Phosphotyrosine" evidence="1">
    <location>
        <position position="775"/>
    </location>
</feature>
<feature type="modified residue" description="Phosphotyrosine" evidence="1">
    <location>
        <position position="831"/>
    </location>
</feature>
<feature type="modified residue" description="Phosphotyrosine" evidence="3">
    <location>
        <position position="838"/>
    </location>
</feature>
<feature type="glycosylation site" description="N-linked (GlcNAc...) asparagine" evidence="6">
    <location>
        <position position="61"/>
    </location>
</feature>
<feature type="glycosylation site" description="N-linked (GlcNAc...) asparagine" evidence="6">
    <location>
        <position position="109"/>
    </location>
</feature>
<feature type="glycosylation site" description="N-linked (GlcNAc...) asparagine" evidence="6">
    <location>
        <position position="120"/>
    </location>
</feature>
<feature type="glycosylation site" description="N-linked (GlcNAc...) asparagine" evidence="6">
    <location>
        <position position="128"/>
    </location>
</feature>
<feature type="glycosylation site" description="N-linked (GlcNAc...) asparagine" evidence="6">
    <location>
        <position position="167"/>
    </location>
</feature>
<feature type="glycosylation site" description="N-linked (GlcNAc...) asparagine" evidence="6">
    <location>
        <position position="217"/>
    </location>
</feature>
<feature type="glycosylation site" description="N-linked (GlcNAc...) asparagine" evidence="6">
    <location>
        <position position="241"/>
    </location>
</feature>
<feature type="glycosylation site" description="N-linked (GlcNAc...) asparagine" evidence="6">
    <location>
        <position position="269"/>
    </location>
</feature>
<feature type="glycosylation site" description="N-linked (GlcNAc...) asparagine" evidence="6">
    <location>
        <position position="301"/>
    </location>
</feature>
<feature type="glycosylation site" description="N-linked (GlcNAc...) asparagine" evidence="6">
    <location>
        <position position="437"/>
    </location>
</feature>
<feature type="glycosylation site" description="N-linked (GlcNAc...) asparagine" evidence="6">
    <location>
        <position position="527"/>
    </location>
</feature>
<feature type="glycosylation site" description="N-linked (GlcNAc...) asparagine" evidence="6">
    <location>
        <position position="537"/>
    </location>
</feature>
<feature type="mutagenesis site" description="Short inflorescence stems and increased anthocyanin accumulation in leaves." evidence="9">
    <original>S</original>
    <variation>P</variation>
    <location>
        <position position="677"/>
    </location>
</feature>
<feature type="sequence conflict" description="In Ref. 5; BAC42540." evidence="14" ref="5">
    <original>R</original>
    <variation>K</variation>
    <location>
        <position position="621"/>
    </location>
</feature>
<reference key="1">
    <citation type="journal article" date="2010" name="BMC Genomics">
        <title>Genome-wide cloning and sequence analysis of leucine-rich repeat receptor-like protein kinase genes in Arabidopsis thaliana.</title>
        <authorList>
            <person name="Gou X."/>
            <person name="He K."/>
            <person name="Yang H."/>
            <person name="Yuan T."/>
            <person name="Lin H."/>
            <person name="Clouse S.D."/>
            <person name="Li J."/>
        </authorList>
    </citation>
    <scope>NUCLEOTIDE SEQUENCE [MRNA]</scope>
    <scope>GENE FAMILY</scope>
    <source>
        <strain>cv. Columbia</strain>
    </source>
</reference>
<reference key="2">
    <citation type="journal article" date="2000" name="DNA Res.">
        <title>Structural analysis of Arabidopsis thaliana chromosome 5. X. Sequence features of the regions of 3,076,755 bp covered by sixty P1 and TAC clones.</title>
        <authorList>
            <person name="Sato S."/>
            <person name="Nakamura Y."/>
            <person name="Kaneko T."/>
            <person name="Katoh T."/>
            <person name="Asamizu E."/>
            <person name="Kotani H."/>
            <person name="Tabata S."/>
        </authorList>
    </citation>
    <scope>NUCLEOTIDE SEQUENCE [LARGE SCALE GENOMIC DNA]</scope>
    <source>
        <strain>cv. Columbia</strain>
    </source>
</reference>
<reference key="3">
    <citation type="submission" date="1999-04" db="EMBL/GenBank/DDBJ databases">
        <title>Structural analysis of Arabidopsis thaliana chromosome 5. XI.</title>
        <authorList>
            <person name="Kaneko T."/>
            <person name="Katoh T."/>
            <person name="Asamizu E."/>
            <person name="Sato S."/>
            <person name="Nakamura Y."/>
            <person name="Kotani H."/>
            <person name="Tabata S."/>
        </authorList>
    </citation>
    <scope>NUCLEOTIDE SEQUENCE [LARGE SCALE GENOMIC DNA]</scope>
    <source>
        <strain>cv. Columbia</strain>
    </source>
</reference>
<reference key="4">
    <citation type="journal article" date="2017" name="Plant J.">
        <title>Araport11: a complete reannotation of the Arabidopsis thaliana reference genome.</title>
        <authorList>
            <person name="Cheng C.Y."/>
            <person name="Krishnakumar V."/>
            <person name="Chan A.P."/>
            <person name="Thibaud-Nissen F."/>
            <person name="Schobel S."/>
            <person name="Town C.D."/>
        </authorList>
    </citation>
    <scope>GENOME REANNOTATION</scope>
    <source>
        <strain>cv. Columbia</strain>
    </source>
</reference>
<reference key="5">
    <citation type="journal article" date="2002" name="Science">
        <title>Functional annotation of a full-length Arabidopsis cDNA collection.</title>
        <authorList>
            <person name="Seki M."/>
            <person name="Narusaka M."/>
            <person name="Kamiya A."/>
            <person name="Ishida J."/>
            <person name="Satou M."/>
            <person name="Sakurai T."/>
            <person name="Nakajima M."/>
            <person name="Enju A."/>
            <person name="Akiyama K."/>
            <person name="Oono Y."/>
            <person name="Muramatsu M."/>
            <person name="Hayashizaki Y."/>
            <person name="Kawai J."/>
            <person name="Carninci P."/>
            <person name="Itoh M."/>
            <person name="Ishii Y."/>
            <person name="Arakawa T."/>
            <person name="Shibata K."/>
            <person name="Shinagawa A."/>
            <person name="Shinozaki K."/>
        </authorList>
    </citation>
    <scope>NUCLEOTIDE SEQUENCE [LARGE SCALE MRNA]</scope>
    <source>
        <strain>cv. Columbia</strain>
    </source>
</reference>
<reference key="6">
    <citation type="journal article" date="2003" name="Curr. Opin. Plant Biol.">
        <title>Using mutant alleles to determine the structure and function of leucine-rich repeat receptor-like kinases.</title>
        <authorList>
            <person name="Dievart A."/>
            <person name="Clark S.E."/>
        </authorList>
    </citation>
    <scope>GENE FAMILY</scope>
</reference>
<reference key="7">
    <citation type="journal article" date="2012" name="Planta">
        <title>XYLEM INTERMIXED WITH PHLOEM1, a leucine-rich repeat receptor-like kinase required for stem growth and vascular development in Arabidopsis thaliana.</title>
        <authorList>
            <person name="Bryan A.C."/>
            <person name="Obaidi A."/>
            <person name="Wierzba M."/>
            <person name="Tax F.E."/>
        </authorList>
    </citation>
    <scope>FUNCTION</scope>
    <scope>DISRUPTION PHENOTYPE</scope>
    <scope>MUTAGENESIS OF SER-677</scope>
    <scope>TISSUE SPECIFICITY</scope>
    <scope>DEVELOPMENTAL STAGE</scope>
    <source>
        <strain>cv. Columbia</strain>
        <strain>cv. No-0</strain>
    </source>
</reference>
<reference key="8">
    <citation type="journal article" date="2014" name="Science">
        <title>Perception of root-derived peptides by shoot LRR-RKs mediates systemic N-demand signaling.</title>
        <authorList>
            <person name="Tabata R."/>
            <person name="Sumida K."/>
            <person name="Yoshii T."/>
            <person name="Ohyama K."/>
            <person name="Shinohara H."/>
            <person name="Matsubayashi Y."/>
        </authorList>
    </citation>
    <scope>FUNCTION</scope>
    <scope>DISRUPTION PHENOTYPE</scope>
    <scope>INTERACTION WITH CEP1; CEP3 AND CEP5</scope>
    <scope>TISSUE SPECIFICITY</scope>
    <source>
        <strain>cv. No-0</strain>
    </source>
</reference>
<reference key="9">
    <citation type="journal article" date="2016" name="J. Exp. Bot.">
        <title>CEP5 and XIP1/CEPR1 regulate lateral root initiation in Arabidopsis.</title>
        <authorList>
            <person name="Roberts I."/>
            <person name="Smith S."/>
            <person name="Stes E."/>
            <person name="De Rybel B."/>
            <person name="Staes A."/>
            <person name="van de Cotte B."/>
            <person name="Njo M.F."/>
            <person name="Dedeyne L."/>
            <person name="Demol H."/>
            <person name="Lavenus J."/>
            <person name="Audenaert D."/>
            <person name="Gevaert K."/>
            <person name="Beeckman T."/>
            <person name="De Smet I."/>
        </authorList>
    </citation>
    <scope>FUNCTION</scope>
    <scope>DISRUPTION PHENOTYPE</scope>
    <scope>TISSUE SPECIFICITY</scope>
    <scope>DEVELOPMENTAL STAGE</scope>
</reference>
<organism>
    <name type="scientific">Arabidopsis thaliana</name>
    <name type="common">Mouse-ear cress</name>
    <dbReference type="NCBI Taxonomy" id="3702"/>
    <lineage>
        <taxon>Eukaryota</taxon>
        <taxon>Viridiplantae</taxon>
        <taxon>Streptophyta</taxon>
        <taxon>Embryophyta</taxon>
        <taxon>Tracheophyta</taxon>
        <taxon>Spermatophyta</taxon>
        <taxon>Magnoliopsida</taxon>
        <taxon>eudicotyledons</taxon>
        <taxon>Gunneridae</taxon>
        <taxon>Pentapetalae</taxon>
        <taxon>rosids</taxon>
        <taxon>malvids</taxon>
        <taxon>Brassicales</taxon>
        <taxon>Brassicaceae</taxon>
        <taxon>Camelineae</taxon>
        <taxon>Arabidopsis</taxon>
    </lineage>
</organism>
<name>CEPR1_ARATH</name>